<name>GSA_SACEN</name>
<sequence>MTAANPASTPNPESAPRSRELFDRALAVTPGGVNSPVRAFHSVGGTPRFMVRGEGTYLWDADDNRYVDLVSSWGPMINGHAHPDVVRAVRQAAAGGLSFGTPGVGEIDLAAEIIDRVGPVEQVRLVNSGTEATMSAVRLARGFTGRRKVVKFAGCYHGHVDALLASAGSGVATLGLPTTPGVTGAQAADTIVLPYNDLDAVRRTFAEYGDEIACVITEAAAGNMGAIAPAPGFNGGLREITSSAGALLVMDEVMTGFRVSAAGWFGIDGVAGDLYTFGKVMSGGLPAAAFGGRADVMERLAPSGPVYQAGTLAGNPVAVAAGLANLRAATPEVYAALDRNAERLGELLGSALSAEGVPHQVAFAGNLVSVFFSEDPVRDYAGAQAQQSWRFPPFFHALLERGIYPPPSAFEAWFVNAAMDDAAFDAIAEALPHAAKAAAAATEPGAGA</sequence>
<evidence type="ECO:0000255" key="1">
    <source>
        <dbReference type="HAMAP-Rule" id="MF_00375"/>
    </source>
</evidence>
<evidence type="ECO:0000305" key="2"/>
<reference key="1">
    <citation type="journal article" date="2007" name="Nat. Biotechnol.">
        <title>Complete genome sequence of the erythromycin-producing bacterium Saccharopolyspora erythraea NRRL23338.</title>
        <authorList>
            <person name="Oliynyk M."/>
            <person name="Samborskyy M."/>
            <person name="Lester J.B."/>
            <person name="Mironenko T."/>
            <person name="Scott N."/>
            <person name="Dickens S."/>
            <person name="Haydock S.F."/>
            <person name="Leadlay P.F."/>
        </authorList>
    </citation>
    <scope>NUCLEOTIDE SEQUENCE [LARGE SCALE GENOMIC DNA]</scope>
    <source>
        <strain>ATCC 11635 / DSM 40517 / JCM 4748 / NBRC 13426 / NCIMB 8594 / NRRL 2338</strain>
    </source>
</reference>
<feature type="chain" id="PRO_0000382365" description="Glutamate-1-semialdehyde 2,1-aminomutase">
    <location>
        <begin position="1"/>
        <end position="448"/>
    </location>
</feature>
<feature type="modified residue" description="N6-(pyridoxal phosphate)lysine" evidence="1">
    <location>
        <position position="279"/>
    </location>
</feature>
<organism>
    <name type="scientific">Saccharopolyspora erythraea (strain ATCC 11635 / DSM 40517 / JCM 4748 / NBRC 13426 / NCIMB 8594 / NRRL 2338)</name>
    <dbReference type="NCBI Taxonomy" id="405948"/>
    <lineage>
        <taxon>Bacteria</taxon>
        <taxon>Bacillati</taxon>
        <taxon>Actinomycetota</taxon>
        <taxon>Actinomycetes</taxon>
        <taxon>Pseudonocardiales</taxon>
        <taxon>Pseudonocardiaceae</taxon>
        <taxon>Saccharopolyspora</taxon>
    </lineage>
</organism>
<accession>A4FPX3</accession>
<keyword id="KW-0963">Cytoplasm</keyword>
<keyword id="KW-0413">Isomerase</keyword>
<keyword id="KW-0627">Porphyrin biosynthesis</keyword>
<keyword id="KW-0663">Pyridoxal phosphate</keyword>
<keyword id="KW-1185">Reference proteome</keyword>
<proteinExistence type="inferred from homology"/>
<comment type="catalytic activity">
    <reaction evidence="1">
        <text>(S)-4-amino-5-oxopentanoate = 5-aminolevulinate</text>
        <dbReference type="Rhea" id="RHEA:14265"/>
        <dbReference type="ChEBI" id="CHEBI:57501"/>
        <dbReference type="ChEBI" id="CHEBI:356416"/>
        <dbReference type="EC" id="5.4.3.8"/>
    </reaction>
</comment>
<comment type="cofactor">
    <cofactor evidence="1">
        <name>pyridoxal 5'-phosphate</name>
        <dbReference type="ChEBI" id="CHEBI:597326"/>
    </cofactor>
</comment>
<comment type="pathway">
    <text evidence="1">Porphyrin-containing compound metabolism; protoporphyrin-IX biosynthesis; 5-aminolevulinate from L-glutamyl-tRNA(Glu): step 2/2.</text>
</comment>
<comment type="subunit">
    <text evidence="1">Homodimer.</text>
</comment>
<comment type="subcellular location">
    <subcellularLocation>
        <location evidence="1">Cytoplasm</location>
    </subcellularLocation>
</comment>
<comment type="similarity">
    <text evidence="1">Belongs to the class-III pyridoxal-phosphate-dependent aminotransferase family. HemL subfamily.</text>
</comment>
<comment type="sequence caution" evidence="2">
    <conflict type="erroneous initiation">
        <sequence resource="EMBL-CDS" id="CAM06098"/>
    </conflict>
</comment>
<gene>
    <name evidence="1" type="primary">hemL</name>
    <name type="ordered locus">SACE_6935</name>
</gene>
<protein>
    <recommendedName>
        <fullName evidence="1">Glutamate-1-semialdehyde 2,1-aminomutase</fullName>
        <shortName evidence="1">GSA</shortName>
        <ecNumber evidence="1">5.4.3.8</ecNumber>
    </recommendedName>
    <alternativeName>
        <fullName evidence="1">Glutamate-1-semialdehyde aminotransferase</fullName>
        <shortName evidence="1">GSA-AT</shortName>
    </alternativeName>
</protein>
<dbReference type="EC" id="5.4.3.8" evidence="1"/>
<dbReference type="EMBL" id="AM420293">
    <property type="protein sequence ID" value="CAM06098.1"/>
    <property type="status" value="ALT_INIT"/>
    <property type="molecule type" value="Genomic_DNA"/>
</dbReference>
<dbReference type="RefSeq" id="WP_021341652.1">
    <property type="nucleotide sequence ID" value="NC_009142.1"/>
</dbReference>
<dbReference type="SMR" id="A4FPX3"/>
<dbReference type="STRING" id="405948.SACE_6935"/>
<dbReference type="KEGG" id="sen:SACE_6935"/>
<dbReference type="eggNOG" id="COG0001">
    <property type="taxonomic scope" value="Bacteria"/>
</dbReference>
<dbReference type="HOGENOM" id="CLU_016922_1_5_11"/>
<dbReference type="OrthoDB" id="9801052at2"/>
<dbReference type="UniPathway" id="UPA00251">
    <property type="reaction ID" value="UER00317"/>
</dbReference>
<dbReference type="Proteomes" id="UP000006728">
    <property type="component" value="Chromosome"/>
</dbReference>
<dbReference type="GO" id="GO:0005737">
    <property type="term" value="C:cytoplasm"/>
    <property type="evidence" value="ECO:0007669"/>
    <property type="project" value="UniProtKB-SubCell"/>
</dbReference>
<dbReference type="GO" id="GO:0042286">
    <property type="term" value="F:glutamate-1-semialdehyde 2,1-aminomutase activity"/>
    <property type="evidence" value="ECO:0007669"/>
    <property type="project" value="UniProtKB-UniRule"/>
</dbReference>
<dbReference type="GO" id="GO:0030170">
    <property type="term" value="F:pyridoxal phosphate binding"/>
    <property type="evidence" value="ECO:0007669"/>
    <property type="project" value="InterPro"/>
</dbReference>
<dbReference type="GO" id="GO:0008483">
    <property type="term" value="F:transaminase activity"/>
    <property type="evidence" value="ECO:0007669"/>
    <property type="project" value="InterPro"/>
</dbReference>
<dbReference type="GO" id="GO:0006782">
    <property type="term" value="P:protoporphyrinogen IX biosynthetic process"/>
    <property type="evidence" value="ECO:0007669"/>
    <property type="project" value="UniProtKB-UniRule"/>
</dbReference>
<dbReference type="CDD" id="cd00610">
    <property type="entry name" value="OAT_like"/>
    <property type="match status" value="1"/>
</dbReference>
<dbReference type="FunFam" id="3.40.640.10:FF:000021">
    <property type="entry name" value="Glutamate-1-semialdehyde 2,1-aminomutase"/>
    <property type="match status" value="1"/>
</dbReference>
<dbReference type="Gene3D" id="3.90.1150.10">
    <property type="entry name" value="Aspartate Aminotransferase, domain 1"/>
    <property type="match status" value="1"/>
</dbReference>
<dbReference type="Gene3D" id="3.40.640.10">
    <property type="entry name" value="Type I PLP-dependent aspartate aminotransferase-like (Major domain)"/>
    <property type="match status" value="1"/>
</dbReference>
<dbReference type="HAMAP" id="MF_00375">
    <property type="entry name" value="HemL_aminotrans_3"/>
    <property type="match status" value="1"/>
</dbReference>
<dbReference type="InterPro" id="IPR004639">
    <property type="entry name" value="4pyrrol_synth_GluAld_NH2Trfase"/>
</dbReference>
<dbReference type="InterPro" id="IPR005814">
    <property type="entry name" value="Aminotrans_3"/>
</dbReference>
<dbReference type="InterPro" id="IPR049704">
    <property type="entry name" value="Aminotrans_3_PPA_site"/>
</dbReference>
<dbReference type="InterPro" id="IPR015424">
    <property type="entry name" value="PyrdxlP-dep_Trfase"/>
</dbReference>
<dbReference type="InterPro" id="IPR015421">
    <property type="entry name" value="PyrdxlP-dep_Trfase_major"/>
</dbReference>
<dbReference type="InterPro" id="IPR015422">
    <property type="entry name" value="PyrdxlP-dep_Trfase_small"/>
</dbReference>
<dbReference type="NCBIfam" id="TIGR00713">
    <property type="entry name" value="hemL"/>
    <property type="match status" value="1"/>
</dbReference>
<dbReference type="NCBIfam" id="NF000818">
    <property type="entry name" value="PRK00062.1"/>
    <property type="match status" value="1"/>
</dbReference>
<dbReference type="PANTHER" id="PTHR43713">
    <property type="entry name" value="GLUTAMATE-1-SEMIALDEHYDE 2,1-AMINOMUTASE"/>
    <property type="match status" value="1"/>
</dbReference>
<dbReference type="PANTHER" id="PTHR43713:SF3">
    <property type="entry name" value="GLUTAMATE-1-SEMIALDEHYDE 2,1-AMINOMUTASE 1, CHLOROPLASTIC-RELATED"/>
    <property type="match status" value="1"/>
</dbReference>
<dbReference type="Pfam" id="PF00202">
    <property type="entry name" value="Aminotran_3"/>
    <property type="match status" value="1"/>
</dbReference>
<dbReference type="SUPFAM" id="SSF53383">
    <property type="entry name" value="PLP-dependent transferases"/>
    <property type="match status" value="1"/>
</dbReference>
<dbReference type="PROSITE" id="PS00600">
    <property type="entry name" value="AA_TRANSFER_CLASS_3"/>
    <property type="match status" value="1"/>
</dbReference>